<accession>P0CU37</accession>
<accession>A0A1D8PNR9</accession>
<keyword id="KW-0963">Cytoplasm</keyword>
<keyword id="KW-0489">Methyltransferase</keyword>
<keyword id="KW-1185">Reference proteome</keyword>
<keyword id="KW-0949">S-adenosyl-L-methionine</keyword>
<keyword id="KW-0808">Transferase</keyword>
<reference key="1">
    <citation type="journal article" date="2004" name="Proc. Natl. Acad. Sci. U.S.A.">
        <title>The diploid genome sequence of Candida albicans.</title>
        <authorList>
            <person name="Jones T."/>
            <person name="Federspiel N.A."/>
            <person name="Chibana H."/>
            <person name="Dungan J."/>
            <person name="Kalman S."/>
            <person name="Magee B.B."/>
            <person name="Newport G."/>
            <person name="Thorstenson Y.R."/>
            <person name="Agabian N."/>
            <person name="Magee P.T."/>
            <person name="Davis R.W."/>
            <person name="Scherer S."/>
        </authorList>
    </citation>
    <scope>NUCLEOTIDE SEQUENCE [LARGE SCALE GENOMIC DNA]</scope>
    <source>
        <strain>SC5314 / ATCC MYA-2876</strain>
    </source>
</reference>
<reference key="2">
    <citation type="journal article" date="2007" name="Genome Biol.">
        <title>Assembly of the Candida albicans genome into sixteen supercontigs aligned on the eight chromosomes.</title>
        <authorList>
            <person name="van het Hoog M."/>
            <person name="Rast T.J."/>
            <person name="Martchenko M."/>
            <person name="Grindle S."/>
            <person name="Dignard D."/>
            <person name="Hogues H."/>
            <person name="Cuomo C."/>
            <person name="Berriman M."/>
            <person name="Scherer S."/>
            <person name="Magee B.B."/>
            <person name="Whiteway M."/>
            <person name="Chibana H."/>
            <person name="Nantel A."/>
            <person name="Magee P.T."/>
        </authorList>
    </citation>
    <scope>GENOME REANNOTATION</scope>
    <source>
        <strain>SC5314 / ATCC MYA-2876</strain>
    </source>
</reference>
<reference key="3">
    <citation type="journal article" date="2013" name="Genome Biol.">
        <title>Assembly of a phased diploid Candida albicans genome facilitates allele-specific measurements and provides a simple model for repeat and indel structure.</title>
        <authorList>
            <person name="Muzzey D."/>
            <person name="Schwartz K."/>
            <person name="Weissman J.S."/>
            <person name="Sherlock G."/>
        </authorList>
    </citation>
    <scope>NUCLEOTIDE SEQUENCE [LARGE SCALE GENOMIC DNA]</scope>
    <scope>GENOME REANNOTATION</scope>
    <source>
        <strain>SC5314 / ATCC MYA-2876</strain>
    </source>
</reference>
<comment type="function">
    <text evidence="2">S-adenosyl-L-methionine-dependent methyltransferase that catalyzes four methylations of the modified target histidine residue in translation elongation factor 2 (EF-2), to form an intermediate called diphthine methyl ester. The four successive methylation reactions represent the second step of diphthamide biosynthesis.</text>
</comment>
<comment type="catalytic activity">
    <reaction evidence="2">
        <text>2-[(3S)-amino-3-carboxypropyl]-L-histidyl-[translation elongation factor 2] + 4 S-adenosyl-L-methionine = diphthine methyl ester-[translation elongation factor 2] + 4 S-adenosyl-L-homocysteine + 3 H(+)</text>
        <dbReference type="Rhea" id="RHEA:42652"/>
        <dbReference type="Rhea" id="RHEA-COMP:9749"/>
        <dbReference type="Rhea" id="RHEA-COMP:10173"/>
        <dbReference type="ChEBI" id="CHEBI:15378"/>
        <dbReference type="ChEBI" id="CHEBI:57856"/>
        <dbReference type="ChEBI" id="CHEBI:59789"/>
        <dbReference type="ChEBI" id="CHEBI:73995"/>
        <dbReference type="ChEBI" id="CHEBI:79005"/>
        <dbReference type="EC" id="2.1.1.314"/>
    </reaction>
</comment>
<comment type="pathway">
    <text>Protein modification; peptidyl-diphthamide biosynthesis.</text>
</comment>
<comment type="subcellular location">
    <subcellularLocation>
        <location evidence="1">Cytoplasm</location>
    </subcellularLocation>
</comment>
<comment type="similarity">
    <text evidence="3">Belongs to the diphthine synthase family.</text>
</comment>
<dbReference type="EC" id="2.1.1.314"/>
<dbReference type="EMBL" id="CP017627">
    <property type="protein sequence ID" value="AOW29781.1"/>
    <property type="molecule type" value="Genomic_DNA"/>
</dbReference>
<dbReference type="RefSeq" id="XP_711428.2">
    <property type="nucleotide sequence ID" value="XM_706336.2"/>
</dbReference>
<dbReference type="RefSeq" id="XP_711434.2">
    <property type="nucleotide sequence ID" value="XM_706342.2"/>
</dbReference>
<dbReference type="SMR" id="P0CU37"/>
<dbReference type="FunCoup" id="P0CU37">
    <property type="interactions" value="986"/>
</dbReference>
<dbReference type="STRING" id="237561.P0CU37"/>
<dbReference type="EnsemblFungi" id="C5_03640W_A-T">
    <property type="protein sequence ID" value="C5_03640W_A-T-p1"/>
    <property type="gene ID" value="C5_03640W_A"/>
</dbReference>
<dbReference type="EnsemblFungi" id="C5_03700C_A-T">
    <property type="protein sequence ID" value="C5_03700C_A-T-p1"/>
    <property type="gene ID" value="C5_03700C_A"/>
</dbReference>
<dbReference type="GeneID" id="3646990"/>
<dbReference type="KEGG" id="cal:CAALFM_C503640WA"/>
<dbReference type="KEGG" id="cal:CAALFM_C503700CA"/>
<dbReference type="VEuPathDB" id="FungiDB:C5_03640W_A"/>
<dbReference type="VEuPathDB" id="FungiDB:C5_03700C_A"/>
<dbReference type="InParanoid" id="P0CU37"/>
<dbReference type="OMA" id="HNASIMS"/>
<dbReference type="OrthoDB" id="2516at2759"/>
<dbReference type="UniPathway" id="UPA00559"/>
<dbReference type="Proteomes" id="UP000000559">
    <property type="component" value="Chromosome 5"/>
</dbReference>
<dbReference type="GO" id="GO:0005737">
    <property type="term" value="C:cytoplasm"/>
    <property type="evidence" value="ECO:0007669"/>
    <property type="project" value="UniProtKB-SubCell"/>
</dbReference>
<dbReference type="GO" id="GO:0141133">
    <property type="term" value="F:diphthine methyl ester synthase activity"/>
    <property type="evidence" value="ECO:0007669"/>
    <property type="project" value="UniProtKB-EC"/>
</dbReference>
<dbReference type="GO" id="GO:0032259">
    <property type="term" value="P:methylation"/>
    <property type="evidence" value="ECO:0007669"/>
    <property type="project" value="UniProtKB-KW"/>
</dbReference>
<dbReference type="GO" id="GO:0017183">
    <property type="term" value="P:protein histidyl modification to diphthamide"/>
    <property type="evidence" value="ECO:0007669"/>
    <property type="project" value="UniProtKB-UniPathway"/>
</dbReference>
<dbReference type="CDD" id="cd11647">
    <property type="entry name" value="DHP5_DphB"/>
    <property type="match status" value="1"/>
</dbReference>
<dbReference type="FunFam" id="3.30.950.10:FF:000004">
    <property type="entry name" value="Diphthine synthase putative"/>
    <property type="match status" value="1"/>
</dbReference>
<dbReference type="FunFam" id="3.40.1010.10:FF:000004">
    <property type="entry name" value="Putative diphthine synthase"/>
    <property type="match status" value="1"/>
</dbReference>
<dbReference type="Gene3D" id="3.40.1010.10">
    <property type="entry name" value="Cobalt-precorrin-4 Transmethylase, Domain 1"/>
    <property type="match status" value="1"/>
</dbReference>
<dbReference type="Gene3D" id="3.30.950.10">
    <property type="entry name" value="Methyltransferase, Cobalt-precorrin-4 Transmethylase, Domain 2"/>
    <property type="match status" value="1"/>
</dbReference>
<dbReference type="HAMAP" id="MF_01084">
    <property type="entry name" value="Diphthine_synth"/>
    <property type="match status" value="1"/>
</dbReference>
<dbReference type="InterPro" id="IPR000878">
    <property type="entry name" value="4pyrrol_Mease"/>
</dbReference>
<dbReference type="InterPro" id="IPR035996">
    <property type="entry name" value="4pyrrol_Methylase_sf"/>
</dbReference>
<dbReference type="InterPro" id="IPR014777">
    <property type="entry name" value="4pyrrole_Mease_sub1"/>
</dbReference>
<dbReference type="InterPro" id="IPR014776">
    <property type="entry name" value="4pyrrole_Mease_sub2"/>
</dbReference>
<dbReference type="InterPro" id="IPR004551">
    <property type="entry name" value="Dphthn_synthase"/>
</dbReference>
<dbReference type="NCBIfam" id="TIGR00522">
    <property type="entry name" value="dph5"/>
    <property type="match status" value="1"/>
</dbReference>
<dbReference type="PANTHER" id="PTHR10882:SF0">
    <property type="entry name" value="DIPHTHINE METHYL ESTER SYNTHASE"/>
    <property type="match status" value="1"/>
</dbReference>
<dbReference type="PANTHER" id="PTHR10882">
    <property type="entry name" value="DIPHTHINE SYNTHASE"/>
    <property type="match status" value="1"/>
</dbReference>
<dbReference type="Pfam" id="PF00590">
    <property type="entry name" value="TP_methylase"/>
    <property type="match status" value="1"/>
</dbReference>
<dbReference type="PIRSF" id="PIRSF036432">
    <property type="entry name" value="Diphthine_synth"/>
    <property type="match status" value="1"/>
</dbReference>
<dbReference type="SUPFAM" id="SSF53790">
    <property type="entry name" value="Tetrapyrrole methylase"/>
    <property type="match status" value="1"/>
</dbReference>
<organism>
    <name type="scientific">Candida albicans (strain SC5314 / ATCC MYA-2876)</name>
    <name type="common">Yeast</name>
    <dbReference type="NCBI Taxonomy" id="237561"/>
    <lineage>
        <taxon>Eukaryota</taxon>
        <taxon>Fungi</taxon>
        <taxon>Dikarya</taxon>
        <taxon>Ascomycota</taxon>
        <taxon>Saccharomycotina</taxon>
        <taxon>Pichiomycetes</taxon>
        <taxon>Debaryomycetaceae</taxon>
        <taxon>Candida/Lodderomyces clade</taxon>
        <taxon>Candida</taxon>
    </lineage>
</organism>
<protein>
    <recommendedName>
        <fullName>Diphthine methyl ester synthase 2</fullName>
        <ecNumber>2.1.1.314</ecNumber>
    </recommendedName>
    <alternativeName>
        <fullName>Diphthamide biosynthesis methyltransferase 2</fullName>
    </alternativeName>
</protein>
<proteinExistence type="inferred from homology"/>
<name>DPH52_CANAL</name>
<sequence>MLYLIGLGLSYESDITVRGLETVKKCKRVYLEAYTSILMAANQESLEKFYGREIILADRELVETGSDDILKDADKEDVAFLVVGDPFGATTHTDLVIRARELGIKVETIHNASVMNAVGACGLQLYQFGQTVSLVFFTDSWKPDSFYGKIMENRKIGLHTLLLLDIKVKEQSIENMARGRLIYEPPRYMDIATAAQQLLEIESIRQEQAYTPNTPCVAISRLGSPTQTFKAGTLQELSEYDSGEPLHSLVMLGRQVHELELEYLYQFVDDKEKFKKFVEQDQEFFKPAPYVPPEDVDSE</sequence>
<gene>
    <name type="ordered locus">CAALFM_C503700CA</name>
</gene>
<feature type="chain" id="PRO_0000439077" description="Diphthine methyl ester synthase 2">
    <location>
        <begin position="1"/>
        <end position="299"/>
    </location>
</feature>
<feature type="binding site" evidence="1">
    <location>
        <position position="9"/>
    </location>
    <ligand>
        <name>S-adenosyl-L-methionine</name>
        <dbReference type="ChEBI" id="CHEBI:59789"/>
    </ligand>
</feature>
<feature type="binding site" evidence="1">
    <location>
        <position position="85"/>
    </location>
    <ligand>
        <name>S-adenosyl-L-methionine</name>
        <dbReference type="ChEBI" id="CHEBI:59789"/>
    </ligand>
</feature>
<feature type="binding site" evidence="1">
    <location>
        <position position="88"/>
    </location>
    <ligand>
        <name>S-adenosyl-L-methionine</name>
        <dbReference type="ChEBI" id="CHEBI:59789"/>
    </ligand>
</feature>
<feature type="binding site" evidence="1">
    <location>
        <begin position="113"/>
        <end position="114"/>
    </location>
    <ligand>
        <name>S-adenosyl-L-methionine</name>
        <dbReference type="ChEBI" id="CHEBI:59789"/>
    </ligand>
</feature>
<feature type="binding site" evidence="1">
    <location>
        <position position="164"/>
    </location>
    <ligand>
        <name>S-adenosyl-L-methionine</name>
        <dbReference type="ChEBI" id="CHEBI:59789"/>
    </ligand>
</feature>
<feature type="binding site" evidence="1">
    <location>
        <position position="222"/>
    </location>
    <ligand>
        <name>S-adenosyl-L-methionine</name>
        <dbReference type="ChEBI" id="CHEBI:59789"/>
    </ligand>
</feature>
<feature type="binding site" evidence="1">
    <location>
        <position position="247"/>
    </location>
    <ligand>
        <name>S-adenosyl-L-methionine</name>
        <dbReference type="ChEBI" id="CHEBI:59789"/>
    </ligand>
</feature>
<evidence type="ECO:0000250" key="1"/>
<evidence type="ECO:0000250" key="2">
    <source>
        <dbReference type="UniProtKB" id="P32469"/>
    </source>
</evidence>
<evidence type="ECO:0000305" key="3"/>